<evidence type="ECO:0000305" key="1"/>
<protein>
    <recommendedName>
        <fullName>Fructokinase-1</fullName>
        <ecNumber>2.7.1.4</ecNumber>
    </recommendedName>
    <alternativeName>
        <fullName>Fructokinase I</fullName>
    </alternativeName>
</protein>
<keyword id="KW-0067">ATP-binding</keyword>
<keyword id="KW-0119">Carbohydrate metabolism</keyword>
<keyword id="KW-0903">Direct protein sequencing</keyword>
<keyword id="KW-0418">Kinase</keyword>
<keyword id="KW-0460">Magnesium</keyword>
<keyword id="KW-0479">Metal-binding</keyword>
<keyword id="KW-0547">Nucleotide-binding</keyword>
<keyword id="KW-0808">Transferase</keyword>
<keyword id="KW-0862">Zinc</keyword>
<accession>Q09124</accession>
<dbReference type="EC" id="2.7.1.4"/>
<dbReference type="PIR" id="A39319">
    <property type="entry name" value="A39319"/>
</dbReference>
<dbReference type="BioCyc" id="MetaCyc:MONOMER-13045"/>
<dbReference type="SABIO-RK" id="Q09124"/>
<dbReference type="GO" id="GO:0005524">
    <property type="term" value="F:ATP binding"/>
    <property type="evidence" value="ECO:0007669"/>
    <property type="project" value="UniProtKB-KW"/>
</dbReference>
<dbReference type="GO" id="GO:0008865">
    <property type="term" value="F:fructokinase activity"/>
    <property type="evidence" value="ECO:0007669"/>
    <property type="project" value="UniProtKB-EC"/>
</dbReference>
<dbReference type="GO" id="GO:0046872">
    <property type="term" value="F:metal ion binding"/>
    <property type="evidence" value="ECO:0007669"/>
    <property type="project" value="UniProtKB-KW"/>
</dbReference>
<organism>
    <name type="scientific">Lactococcus lactis subsp. lactis</name>
    <name type="common">Streptococcus lactis</name>
    <dbReference type="NCBI Taxonomy" id="1360"/>
    <lineage>
        <taxon>Bacteria</taxon>
        <taxon>Bacillati</taxon>
        <taxon>Bacillota</taxon>
        <taxon>Bacilli</taxon>
        <taxon>Lactobacillales</taxon>
        <taxon>Streptococcaceae</taxon>
        <taxon>Lactococcus</taxon>
    </lineage>
</organism>
<name>SCRK_LACLL</name>
<comment type="catalytic activity">
    <reaction>
        <text>D-fructose + ATP = D-fructose 6-phosphate + ADP + H(+)</text>
        <dbReference type="Rhea" id="RHEA:16125"/>
        <dbReference type="ChEBI" id="CHEBI:15378"/>
        <dbReference type="ChEBI" id="CHEBI:30616"/>
        <dbReference type="ChEBI" id="CHEBI:37721"/>
        <dbReference type="ChEBI" id="CHEBI:61527"/>
        <dbReference type="ChEBI" id="CHEBI:456216"/>
        <dbReference type="EC" id="2.7.1.4"/>
    </reaction>
</comment>
<comment type="cofactor">
    <cofactor>
        <name>Mg(2+)</name>
        <dbReference type="ChEBI" id="CHEBI:18420"/>
    </cofactor>
</comment>
<comment type="activity regulation">
    <text evidence="1">Inhibition by zinc ions (Potential). Inactivated by EDTA.</text>
</comment>
<comment type="biophysicochemical properties">
    <phDependence>
        <text>Optimum pH is 7.0-8.0.</text>
    </phDependence>
</comment>
<comment type="subunit">
    <text>Homodimer.</text>
</comment>
<comment type="miscellaneous">
    <text>Two isoforms, fructokinase I and II, have been found in this organism.</text>
</comment>
<comment type="similarity">
    <text evidence="1">Belongs to the ROK (NagC/XylR) family.</text>
</comment>
<reference key="1">
    <citation type="journal article" date="1991" name="J. Biol. Chem.">
        <title>Purification and properties of fructokinase I from Lactococcus lactis. Localization of scrK on the sucrose-nisin transposon Tn5306.</title>
        <authorList>
            <person name="Thompson J."/>
            <person name="Sackett D.L."/>
            <person name="Donkersloot J.A."/>
        </authorList>
    </citation>
    <scope>PROTEIN SEQUENCE</scope>
    <scope>CHARACTERIZATION</scope>
    <source>
        <strain>K1</strain>
    </source>
</reference>
<feature type="chain" id="PRO_0000095684" description="Fructokinase-1">
    <location>
        <begin position="1"/>
        <end position="25" status="greater than"/>
    </location>
</feature>
<feature type="non-terminal residue">
    <location>
        <position position="25"/>
    </location>
</feature>
<sequence length="25" mass="2702">SVYYGSIEAGGTKFVLAIADEHFNI</sequence>
<proteinExistence type="evidence at protein level"/>